<reference key="1">
    <citation type="journal article" date="2006" name="Theor. Appl. Genet.">
        <title>Complete chloroplast genome sequences of Solanum bulbocastanum, Solanum lycopersicum and comparative analyses with other Solanaceae genomes.</title>
        <authorList>
            <person name="Daniell H."/>
            <person name="Lee S.-B."/>
            <person name="Grevich J."/>
            <person name="Saski C."/>
            <person name="Quesada-Vargas T."/>
            <person name="Guda C."/>
            <person name="Tomkins J."/>
            <person name="Jansen R.K."/>
        </authorList>
    </citation>
    <scope>NUCLEOTIDE SEQUENCE [LARGE SCALE GENOMIC DNA]</scope>
    <source>
        <strain>cv. PT29</strain>
    </source>
</reference>
<comment type="function">
    <text evidence="2">One of the components of the core complex of photosystem II (PSII), required for its stability and/or assembly. PSII is a light-driven water:plastoquinone oxidoreductase that uses light energy to abstract electrons from H(2)O, generating O(2) and a proton gradient subsequently used for ATP formation. It consists of a core antenna complex that captures photons, and an electron transfer chain that converts photonic excitation into a charge separation.</text>
</comment>
<comment type="subunit">
    <text evidence="2">PSII is composed of 1 copy each of membrane proteins PsbA, PsbB, PsbC, PsbD, PsbE, PsbF, PsbH, PsbI, PsbJ, PsbK, PsbL, PsbM, PsbT, PsbX, PsbY, PsbZ, Psb30/Ycf12, at least 3 peripheral proteins of the oxygen-evolving complex and a large number of cofactors. It forms dimeric complexes.</text>
</comment>
<comment type="subcellular location">
    <subcellularLocation>
        <location evidence="2">Plastid</location>
        <location evidence="2">Chloroplast thylakoid membrane</location>
        <topology evidence="2">Single-pass membrane protein</topology>
    </subcellularLocation>
</comment>
<comment type="PTM">
    <text evidence="2">Phosphorylation is a light-dependent reaction catalyzed by a membrane-bound kinase; phosphorylation occurs on Thr residue(s) in the N-terminus of the protein.</text>
</comment>
<comment type="similarity">
    <text evidence="2">Belongs to the PsbH family.</text>
</comment>
<accession>Q2MIF9</accession>
<evidence type="ECO:0000250" key="1">
    <source>
        <dbReference type="UniProtKB" id="P56780"/>
    </source>
</evidence>
<evidence type="ECO:0000255" key="2">
    <source>
        <dbReference type="HAMAP-Rule" id="MF_00752"/>
    </source>
</evidence>
<evidence type="ECO:0000256" key="3">
    <source>
        <dbReference type="SAM" id="MobiDB-lite"/>
    </source>
</evidence>
<protein>
    <recommendedName>
        <fullName evidence="2">Photosystem II reaction center protein H</fullName>
        <shortName evidence="2">PSII-H</shortName>
    </recommendedName>
    <alternativeName>
        <fullName evidence="2">Photosystem II 10 kDa phosphoprotein</fullName>
    </alternativeName>
</protein>
<proteinExistence type="inferred from homology"/>
<feature type="initiator methionine" description="Removed" evidence="1">
    <location>
        <position position="1"/>
    </location>
</feature>
<feature type="chain" id="PRO_0000275772" description="Photosystem II reaction center protein H">
    <location>
        <begin position="2"/>
        <end position="73"/>
    </location>
</feature>
<feature type="transmembrane region" description="Helical" evidence="2">
    <location>
        <begin position="41"/>
        <end position="61"/>
    </location>
</feature>
<feature type="region of interest" description="Disordered" evidence="3">
    <location>
        <begin position="1"/>
        <end position="20"/>
    </location>
</feature>
<feature type="compositionally biased region" description="Polar residues" evidence="3">
    <location>
        <begin position="1"/>
        <end position="12"/>
    </location>
</feature>
<feature type="modified residue" description="Phosphothreonine" evidence="2">
    <location>
        <position position="3"/>
    </location>
</feature>
<feature type="modified residue" description="Phosphothreonine" evidence="2">
    <location>
        <position position="5"/>
    </location>
</feature>
<keyword id="KW-0150">Chloroplast</keyword>
<keyword id="KW-0472">Membrane</keyword>
<keyword id="KW-0597">Phosphoprotein</keyword>
<keyword id="KW-0602">Photosynthesis</keyword>
<keyword id="KW-0604">Photosystem II</keyword>
<keyword id="KW-0934">Plastid</keyword>
<keyword id="KW-0793">Thylakoid</keyword>
<keyword id="KW-0812">Transmembrane</keyword>
<keyword id="KW-1133">Transmembrane helix</keyword>
<dbReference type="EMBL" id="DQ347958">
    <property type="protein sequence ID" value="ABC56241.1"/>
    <property type="molecule type" value="Genomic_DNA"/>
</dbReference>
<dbReference type="RefSeq" id="YP_538878.1">
    <property type="nucleotide sequence ID" value="NC_007943.1"/>
</dbReference>
<dbReference type="SMR" id="Q2MIF9"/>
<dbReference type="GeneID" id="3989521"/>
<dbReference type="GO" id="GO:0009535">
    <property type="term" value="C:chloroplast thylakoid membrane"/>
    <property type="evidence" value="ECO:0007669"/>
    <property type="project" value="UniProtKB-SubCell"/>
</dbReference>
<dbReference type="GO" id="GO:0009523">
    <property type="term" value="C:photosystem II"/>
    <property type="evidence" value="ECO:0007669"/>
    <property type="project" value="UniProtKB-KW"/>
</dbReference>
<dbReference type="GO" id="GO:0042301">
    <property type="term" value="F:phosphate ion binding"/>
    <property type="evidence" value="ECO:0007669"/>
    <property type="project" value="InterPro"/>
</dbReference>
<dbReference type="GO" id="GO:0015979">
    <property type="term" value="P:photosynthesis"/>
    <property type="evidence" value="ECO:0007669"/>
    <property type="project" value="UniProtKB-UniRule"/>
</dbReference>
<dbReference type="GO" id="GO:0050821">
    <property type="term" value="P:protein stabilization"/>
    <property type="evidence" value="ECO:0007669"/>
    <property type="project" value="InterPro"/>
</dbReference>
<dbReference type="FunFam" id="1.20.5.880:FF:000001">
    <property type="entry name" value="Photosystem II reaction center protein H"/>
    <property type="match status" value="1"/>
</dbReference>
<dbReference type="Gene3D" id="1.20.5.880">
    <property type="entry name" value="Photosystem II reaction center protein H"/>
    <property type="match status" value="1"/>
</dbReference>
<dbReference type="HAMAP" id="MF_00752">
    <property type="entry name" value="PSII_PsbH"/>
    <property type="match status" value="1"/>
</dbReference>
<dbReference type="InterPro" id="IPR001056">
    <property type="entry name" value="PSII_PsbH"/>
</dbReference>
<dbReference type="InterPro" id="IPR036863">
    <property type="entry name" value="PSII_PsbH_sf"/>
</dbReference>
<dbReference type="NCBIfam" id="NF002728">
    <property type="entry name" value="PRK02624.1"/>
    <property type="match status" value="1"/>
</dbReference>
<dbReference type="PANTHER" id="PTHR34469">
    <property type="entry name" value="PHOTOSYSTEM II REACTION CENTER PROTEIN H"/>
    <property type="match status" value="1"/>
</dbReference>
<dbReference type="PANTHER" id="PTHR34469:SF4">
    <property type="entry name" value="PHOTOSYSTEM II REACTION CENTER PROTEIN H"/>
    <property type="match status" value="1"/>
</dbReference>
<dbReference type="Pfam" id="PF00737">
    <property type="entry name" value="PsbH"/>
    <property type="match status" value="1"/>
</dbReference>
<dbReference type="SUPFAM" id="SSF161025">
    <property type="entry name" value="Photosystem II 10 kDa phosphoprotein PsbH"/>
    <property type="match status" value="1"/>
</dbReference>
<organism>
    <name type="scientific">Solanum bulbocastanum</name>
    <name type="common">Wild potato</name>
    <dbReference type="NCBI Taxonomy" id="147425"/>
    <lineage>
        <taxon>Eukaryota</taxon>
        <taxon>Viridiplantae</taxon>
        <taxon>Streptophyta</taxon>
        <taxon>Embryophyta</taxon>
        <taxon>Tracheophyta</taxon>
        <taxon>Spermatophyta</taxon>
        <taxon>Magnoliopsida</taxon>
        <taxon>eudicotyledons</taxon>
        <taxon>Gunneridae</taxon>
        <taxon>Pentapetalae</taxon>
        <taxon>asterids</taxon>
        <taxon>lamiids</taxon>
        <taxon>Solanales</taxon>
        <taxon>Solanaceae</taxon>
        <taxon>Solanoideae</taxon>
        <taxon>Solaneae</taxon>
        <taxon>Solanum</taxon>
    </lineage>
</organism>
<geneLocation type="chloroplast"/>
<sequence length="73" mass="7759">MATQTVENSSRSGPRRTAVGDLLKPLNSEYGKVAPGWGTTPLMGVAMALFAVFLSIILEIYNSSVLLDGISMN</sequence>
<name>PSBH_SOLBU</name>
<gene>
    <name evidence="2" type="primary">psbH</name>
</gene>